<dbReference type="EMBL" id="AK025402">
    <property type="protein sequence ID" value="BAB15126.1"/>
    <property type="molecule type" value="mRNA"/>
</dbReference>
<dbReference type="EMBL" id="BC013883">
    <property type="protein sequence ID" value="AAH13883.1"/>
    <property type="molecule type" value="mRNA"/>
</dbReference>
<dbReference type="EMBL" id="BC125134">
    <property type="protein sequence ID" value="AAI25135.1"/>
    <property type="molecule type" value="mRNA"/>
</dbReference>
<dbReference type="CCDS" id="CCDS41678.1">
    <molecule id="Q9H6X4-2"/>
</dbReference>
<dbReference type="CCDS" id="CCDS8167.1">
    <molecule id="Q9H6X4-1"/>
</dbReference>
<dbReference type="RefSeq" id="NP_001072118.1">
    <molecule id="Q9H6X4-2"/>
    <property type="nucleotide sequence ID" value="NM_001078650.3"/>
</dbReference>
<dbReference type="RefSeq" id="NP_001072119.1">
    <property type="nucleotide sequence ID" value="NM_001078651.2"/>
</dbReference>
<dbReference type="RefSeq" id="NP_079400.1">
    <molecule id="Q9H6X4-1"/>
    <property type="nucleotide sequence ID" value="NM_025124.4"/>
</dbReference>
<dbReference type="BioGRID" id="123167">
    <property type="interactions" value="18"/>
</dbReference>
<dbReference type="FunCoup" id="Q9H6X4">
    <property type="interactions" value="694"/>
</dbReference>
<dbReference type="IntAct" id="Q9H6X4">
    <property type="interactions" value="12"/>
</dbReference>
<dbReference type="STRING" id="9606.ENSP00000312615"/>
<dbReference type="TCDB" id="9.B.232.1.8">
    <property type="family name" value="the parkinson's disease tmem230 (tmem230) family"/>
</dbReference>
<dbReference type="GlyGen" id="Q9H6X4">
    <property type="glycosylation" value="1 site"/>
</dbReference>
<dbReference type="iPTMnet" id="Q9H6X4"/>
<dbReference type="PhosphoSitePlus" id="Q9H6X4"/>
<dbReference type="SwissPalm" id="Q9H6X4"/>
<dbReference type="BioMuta" id="TMEM134"/>
<dbReference type="DMDM" id="74718574"/>
<dbReference type="jPOST" id="Q9H6X4"/>
<dbReference type="MassIVE" id="Q9H6X4"/>
<dbReference type="PaxDb" id="9606-ENSP00000312615"/>
<dbReference type="PeptideAtlas" id="Q9H6X4"/>
<dbReference type="ProteomicsDB" id="81052">
    <molecule id="Q9H6X4-1"/>
</dbReference>
<dbReference type="ProteomicsDB" id="81053">
    <molecule id="Q9H6X4-2"/>
</dbReference>
<dbReference type="ProteomicsDB" id="81054">
    <molecule id="Q9H6X4-3"/>
</dbReference>
<dbReference type="Antibodypedia" id="30426">
    <property type="antibodies" value="65 antibodies from 13 providers"/>
</dbReference>
<dbReference type="DNASU" id="80194"/>
<dbReference type="Ensembl" id="ENST00000308022.7">
    <molecule id="Q9H6X4-1"/>
    <property type="protein sequence ID" value="ENSP00000312615.2"/>
    <property type="gene ID" value="ENSG00000172663.9"/>
</dbReference>
<dbReference type="Ensembl" id="ENST00000393877.3">
    <molecule id="Q9H6X4-2"/>
    <property type="protein sequence ID" value="ENSP00000377455.3"/>
    <property type="gene ID" value="ENSG00000172663.9"/>
</dbReference>
<dbReference type="Ensembl" id="ENST00000545682.5">
    <molecule id="Q9H6X4-3"/>
    <property type="protein sequence ID" value="ENSP00000438439.1"/>
    <property type="gene ID" value="ENSG00000172663.9"/>
</dbReference>
<dbReference type="GeneID" id="80194"/>
<dbReference type="KEGG" id="hsa:80194"/>
<dbReference type="MANE-Select" id="ENST00000308022.7">
    <property type="protein sequence ID" value="ENSP00000312615.2"/>
    <property type="RefSeq nucleotide sequence ID" value="NM_025124.4"/>
    <property type="RefSeq protein sequence ID" value="NP_079400.1"/>
</dbReference>
<dbReference type="UCSC" id="uc001olq.3">
    <molecule id="Q9H6X4-1"/>
    <property type="organism name" value="human"/>
</dbReference>
<dbReference type="AGR" id="HGNC:26142"/>
<dbReference type="CTD" id="80194"/>
<dbReference type="DisGeNET" id="80194"/>
<dbReference type="GeneCards" id="TMEM134"/>
<dbReference type="HGNC" id="HGNC:26142">
    <property type="gene designation" value="TMEM134"/>
</dbReference>
<dbReference type="HPA" id="ENSG00000172663">
    <property type="expression patterns" value="Low tissue specificity"/>
</dbReference>
<dbReference type="neXtProt" id="NX_Q9H6X4"/>
<dbReference type="OpenTargets" id="ENSG00000172663"/>
<dbReference type="PharmGKB" id="PA143485657"/>
<dbReference type="VEuPathDB" id="HostDB:ENSG00000172663"/>
<dbReference type="eggNOG" id="KOG4753">
    <property type="taxonomic scope" value="Eukaryota"/>
</dbReference>
<dbReference type="GeneTree" id="ENSGT00390000011766"/>
<dbReference type="HOGENOM" id="CLU_1427558_0_0_1"/>
<dbReference type="InParanoid" id="Q9H6X4"/>
<dbReference type="OMA" id="WRSPPCH"/>
<dbReference type="OrthoDB" id="10048380at2759"/>
<dbReference type="PAN-GO" id="Q9H6X4">
    <property type="GO annotations" value="0 GO annotations based on evolutionary models"/>
</dbReference>
<dbReference type="PhylomeDB" id="Q9H6X4"/>
<dbReference type="TreeFam" id="TF323560"/>
<dbReference type="PathwayCommons" id="Q9H6X4"/>
<dbReference type="SignaLink" id="Q9H6X4"/>
<dbReference type="BioGRID-ORCS" id="80194">
    <property type="hits" value="15 hits in 1174 CRISPR screens"/>
</dbReference>
<dbReference type="ChiTaRS" id="TMEM134">
    <property type="organism name" value="human"/>
</dbReference>
<dbReference type="GenomeRNAi" id="80194"/>
<dbReference type="Pharos" id="Q9H6X4">
    <property type="development level" value="Tdark"/>
</dbReference>
<dbReference type="PRO" id="PR:Q9H6X4"/>
<dbReference type="Proteomes" id="UP000005640">
    <property type="component" value="Chromosome 11"/>
</dbReference>
<dbReference type="RNAct" id="Q9H6X4">
    <property type="molecule type" value="protein"/>
</dbReference>
<dbReference type="Bgee" id="ENSG00000172663">
    <property type="expression patterns" value="Expressed in lower esophagus mucosa and 200 other cell types or tissues"/>
</dbReference>
<dbReference type="ExpressionAtlas" id="Q9H6X4">
    <property type="expression patterns" value="baseline and differential"/>
</dbReference>
<dbReference type="GO" id="GO:0005829">
    <property type="term" value="C:cytosol"/>
    <property type="evidence" value="ECO:0000314"/>
    <property type="project" value="HPA"/>
</dbReference>
<dbReference type="GO" id="GO:0016020">
    <property type="term" value="C:membrane"/>
    <property type="evidence" value="ECO:0007669"/>
    <property type="project" value="UniProtKB-SubCell"/>
</dbReference>
<dbReference type="GO" id="GO:0048471">
    <property type="term" value="C:perinuclear region of cytoplasm"/>
    <property type="evidence" value="ECO:0000314"/>
    <property type="project" value="UniProtKB"/>
</dbReference>
<dbReference type="InterPro" id="IPR039714">
    <property type="entry name" value="TMEM134"/>
</dbReference>
<dbReference type="InterPro" id="IPR008590">
    <property type="entry name" value="TMEM_230/134"/>
</dbReference>
<dbReference type="PANTHER" id="PTHR13558">
    <property type="entry name" value="TRANSMEMBRANE PROTEIN 134"/>
    <property type="match status" value="1"/>
</dbReference>
<dbReference type="PANTHER" id="PTHR13558:SF1">
    <property type="entry name" value="TRANSMEMBRANE PROTEIN 134"/>
    <property type="match status" value="1"/>
</dbReference>
<dbReference type="Pfam" id="PF05915">
    <property type="entry name" value="TMEM_230_134"/>
    <property type="match status" value="1"/>
</dbReference>
<feature type="chain" id="PRO_0000279485" description="Transmembrane protein 134">
    <location>
        <begin position="1"/>
        <end position="195"/>
    </location>
</feature>
<feature type="topological domain" description="Cytoplasmic" evidence="2">
    <location>
        <begin position="1"/>
        <end position="122"/>
    </location>
</feature>
<feature type="transmembrane region" description="Helical" evidence="2">
    <location>
        <begin position="123"/>
        <end position="143"/>
    </location>
</feature>
<feature type="topological domain" description="Extracellular" evidence="2">
    <location>
        <begin position="144"/>
        <end position="154"/>
    </location>
</feature>
<feature type="transmembrane region" description="Helical" evidence="2">
    <location>
        <begin position="155"/>
        <end position="175"/>
    </location>
</feature>
<feature type="topological domain" description="Cytoplasmic" evidence="2">
    <location>
        <begin position="176"/>
        <end position="195"/>
    </location>
</feature>
<feature type="region of interest" description="Disordered" evidence="3">
    <location>
        <begin position="1"/>
        <end position="33"/>
    </location>
</feature>
<feature type="region of interest" description="Disordered" evidence="3">
    <location>
        <begin position="48"/>
        <end position="88"/>
    </location>
</feature>
<feature type="modified residue" description="Phosphoserine" evidence="1">
    <location>
        <position position="93"/>
    </location>
</feature>
<feature type="splice variant" id="VSP_023452" description="In isoform 2." evidence="5">
    <location>
        <begin position="136"/>
        <end position="150"/>
    </location>
</feature>
<feature type="splice variant" id="VSP_023453" description="In isoform 3." evidence="5">
    <original>V</original>
    <variation>GPAQCLALETELGELPGEGLCLGHLQLRWWVSRAGGGSPRPHHCSCPHPRGSVCVQC</variation>
    <location>
        <position position="136"/>
    </location>
</feature>
<feature type="splice variant" id="VSP_023454" description="In isoform 3." evidence="5">
    <location>
        <begin position="137"/>
        <end position="195"/>
    </location>
</feature>
<sequence length="195" mass="21586">MSAARPQFSIDDAFELSLEDGGPGPESSGVARFGPLHFERRARFEVADEDKQSRLRYQNLENDEDGAQASPEPDGGVGTRDSSRTSIRSSQWSFSTISSSTQRSYNTCCSWTQHPLIQKNRRVVLASFLLLLLGLVLILVGVGLEATPSPGVSSAIFFVPGFLLLVPGVYHVIFIYCAVKGHRGFQFFYLPYFEK</sequence>
<organism>
    <name type="scientific">Homo sapiens</name>
    <name type="common">Human</name>
    <dbReference type="NCBI Taxonomy" id="9606"/>
    <lineage>
        <taxon>Eukaryota</taxon>
        <taxon>Metazoa</taxon>
        <taxon>Chordata</taxon>
        <taxon>Craniata</taxon>
        <taxon>Vertebrata</taxon>
        <taxon>Euteleostomi</taxon>
        <taxon>Mammalia</taxon>
        <taxon>Eutheria</taxon>
        <taxon>Euarchontoglires</taxon>
        <taxon>Primates</taxon>
        <taxon>Haplorrhini</taxon>
        <taxon>Catarrhini</taxon>
        <taxon>Hominidae</taxon>
        <taxon>Homo</taxon>
    </lineage>
</organism>
<reference key="1">
    <citation type="journal article" date="2004" name="Nat. Genet.">
        <title>Complete sequencing and characterization of 21,243 full-length human cDNAs.</title>
        <authorList>
            <person name="Ota T."/>
            <person name="Suzuki Y."/>
            <person name="Nishikawa T."/>
            <person name="Otsuki T."/>
            <person name="Sugiyama T."/>
            <person name="Irie R."/>
            <person name="Wakamatsu A."/>
            <person name="Hayashi K."/>
            <person name="Sato H."/>
            <person name="Nagai K."/>
            <person name="Kimura K."/>
            <person name="Makita H."/>
            <person name="Sekine M."/>
            <person name="Obayashi M."/>
            <person name="Nishi T."/>
            <person name="Shibahara T."/>
            <person name="Tanaka T."/>
            <person name="Ishii S."/>
            <person name="Yamamoto J."/>
            <person name="Saito K."/>
            <person name="Kawai Y."/>
            <person name="Isono Y."/>
            <person name="Nakamura Y."/>
            <person name="Nagahari K."/>
            <person name="Murakami K."/>
            <person name="Yasuda T."/>
            <person name="Iwayanagi T."/>
            <person name="Wagatsuma M."/>
            <person name="Shiratori A."/>
            <person name="Sudo H."/>
            <person name="Hosoiri T."/>
            <person name="Kaku Y."/>
            <person name="Kodaira H."/>
            <person name="Kondo H."/>
            <person name="Sugawara M."/>
            <person name="Takahashi M."/>
            <person name="Kanda K."/>
            <person name="Yokoi T."/>
            <person name="Furuya T."/>
            <person name="Kikkawa E."/>
            <person name="Omura Y."/>
            <person name="Abe K."/>
            <person name="Kamihara K."/>
            <person name="Katsuta N."/>
            <person name="Sato K."/>
            <person name="Tanikawa M."/>
            <person name="Yamazaki M."/>
            <person name="Ninomiya K."/>
            <person name="Ishibashi T."/>
            <person name="Yamashita H."/>
            <person name="Murakawa K."/>
            <person name="Fujimori K."/>
            <person name="Tanai H."/>
            <person name="Kimata M."/>
            <person name="Watanabe M."/>
            <person name="Hiraoka S."/>
            <person name="Chiba Y."/>
            <person name="Ishida S."/>
            <person name="Ono Y."/>
            <person name="Takiguchi S."/>
            <person name="Watanabe S."/>
            <person name="Yosida M."/>
            <person name="Hotuta T."/>
            <person name="Kusano J."/>
            <person name="Kanehori K."/>
            <person name="Takahashi-Fujii A."/>
            <person name="Hara H."/>
            <person name="Tanase T.-O."/>
            <person name="Nomura Y."/>
            <person name="Togiya S."/>
            <person name="Komai F."/>
            <person name="Hara R."/>
            <person name="Takeuchi K."/>
            <person name="Arita M."/>
            <person name="Imose N."/>
            <person name="Musashino K."/>
            <person name="Yuuki H."/>
            <person name="Oshima A."/>
            <person name="Sasaki N."/>
            <person name="Aotsuka S."/>
            <person name="Yoshikawa Y."/>
            <person name="Matsunawa H."/>
            <person name="Ichihara T."/>
            <person name="Shiohata N."/>
            <person name="Sano S."/>
            <person name="Moriya S."/>
            <person name="Momiyama H."/>
            <person name="Satoh N."/>
            <person name="Takami S."/>
            <person name="Terashima Y."/>
            <person name="Suzuki O."/>
            <person name="Nakagawa S."/>
            <person name="Senoh A."/>
            <person name="Mizoguchi H."/>
            <person name="Goto Y."/>
            <person name="Shimizu F."/>
            <person name="Wakebe H."/>
            <person name="Hishigaki H."/>
            <person name="Watanabe T."/>
            <person name="Sugiyama A."/>
            <person name="Takemoto M."/>
            <person name="Kawakami B."/>
            <person name="Yamazaki M."/>
            <person name="Watanabe K."/>
            <person name="Kumagai A."/>
            <person name="Itakura S."/>
            <person name="Fukuzumi Y."/>
            <person name="Fujimori Y."/>
            <person name="Komiyama M."/>
            <person name="Tashiro H."/>
            <person name="Tanigami A."/>
            <person name="Fujiwara T."/>
            <person name="Ono T."/>
            <person name="Yamada K."/>
            <person name="Fujii Y."/>
            <person name="Ozaki K."/>
            <person name="Hirao M."/>
            <person name="Ohmori Y."/>
            <person name="Kawabata A."/>
            <person name="Hikiji T."/>
            <person name="Kobatake N."/>
            <person name="Inagaki H."/>
            <person name="Ikema Y."/>
            <person name="Okamoto S."/>
            <person name="Okitani R."/>
            <person name="Kawakami T."/>
            <person name="Noguchi S."/>
            <person name="Itoh T."/>
            <person name="Shigeta K."/>
            <person name="Senba T."/>
            <person name="Matsumura K."/>
            <person name="Nakajima Y."/>
            <person name="Mizuno T."/>
            <person name="Morinaga M."/>
            <person name="Sasaki M."/>
            <person name="Togashi T."/>
            <person name="Oyama M."/>
            <person name="Hata H."/>
            <person name="Watanabe M."/>
            <person name="Komatsu T."/>
            <person name="Mizushima-Sugano J."/>
            <person name="Satoh T."/>
            <person name="Shirai Y."/>
            <person name="Takahashi Y."/>
            <person name="Nakagawa K."/>
            <person name="Okumura K."/>
            <person name="Nagase T."/>
            <person name="Nomura N."/>
            <person name="Kikuchi H."/>
            <person name="Masuho Y."/>
            <person name="Yamashita R."/>
            <person name="Nakai K."/>
            <person name="Yada T."/>
            <person name="Nakamura Y."/>
            <person name="Ohara O."/>
            <person name="Isogai T."/>
            <person name="Sugano S."/>
        </authorList>
    </citation>
    <scope>NUCLEOTIDE SEQUENCE [LARGE SCALE MRNA] (ISOFORM 1)</scope>
    <source>
        <tissue>Colon mucosa</tissue>
    </source>
</reference>
<reference key="2">
    <citation type="journal article" date="2004" name="Genome Res.">
        <title>The status, quality, and expansion of the NIH full-length cDNA project: the Mammalian Gene Collection (MGC).</title>
        <authorList>
            <consortium name="The MGC Project Team"/>
        </authorList>
    </citation>
    <scope>NUCLEOTIDE SEQUENCE [LARGE SCALE MRNA] (ISOFORMS 2 AND 3)</scope>
    <source>
        <tissue>Lymph</tissue>
    </source>
</reference>
<reference key="3">
    <citation type="journal article" date="2017" name="Virus Res.">
        <title>Systematic identification of hepatitis E virus ORF2 interactome reveals that TMEM134 engages in ORF2-mediated NF-kappaB pathway.</title>
        <authorList>
            <person name="Tian Y."/>
            <person name="Huang W."/>
            <person name="Yang J."/>
            <person name="Wen Z."/>
            <person name="Geng Y."/>
            <person name="Zhao C."/>
            <person name="Zhang H."/>
            <person name="Wang Y."/>
        </authorList>
    </citation>
    <scope>SUBCELLULAR LOCATION</scope>
    <scope>INTERACTION WITH HEV VIRUS ORF2</scope>
</reference>
<keyword id="KW-0025">Alternative splicing</keyword>
<keyword id="KW-0963">Cytoplasm</keyword>
<keyword id="KW-0945">Host-virus interaction</keyword>
<keyword id="KW-0472">Membrane</keyword>
<keyword id="KW-0597">Phosphoprotein</keyword>
<keyword id="KW-1267">Proteomics identification</keyword>
<keyword id="KW-1185">Reference proteome</keyword>
<keyword id="KW-0812">Transmembrane</keyword>
<keyword id="KW-1133">Transmembrane helix</keyword>
<name>TM134_HUMAN</name>
<evidence type="ECO:0000250" key="1">
    <source>
        <dbReference type="UniProtKB" id="Q8R0J4"/>
    </source>
</evidence>
<evidence type="ECO:0000255" key="2"/>
<evidence type="ECO:0000256" key="3">
    <source>
        <dbReference type="SAM" id="MobiDB-lite"/>
    </source>
</evidence>
<evidence type="ECO:0000269" key="4">
    <source>
    </source>
</evidence>
<evidence type="ECO:0000303" key="5">
    <source>
    </source>
</evidence>
<evidence type="ECO:0000305" key="6"/>
<protein>
    <recommendedName>
        <fullName>Transmembrane protein 134</fullName>
    </recommendedName>
</protein>
<gene>
    <name type="primary">TMEM134</name>
</gene>
<comment type="subunit">
    <text evidence="4">(Microbial infection) Interacts with Hepatitis E virus (HEV) ORF2.</text>
</comment>
<comment type="subcellular location">
    <subcellularLocation>
        <location evidence="6">Membrane</location>
        <topology evidence="6">Multi-pass membrane protein</topology>
    </subcellularLocation>
    <subcellularLocation>
        <location evidence="4">Cytoplasm</location>
        <location evidence="4">Perinuclear region</location>
    </subcellularLocation>
</comment>
<comment type="alternative products">
    <event type="alternative splicing"/>
    <isoform>
        <id>Q9H6X4-1</id>
        <name>1</name>
        <sequence type="displayed"/>
    </isoform>
    <isoform>
        <id>Q9H6X4-2</id>
        <name>2</name>
        <sequence type="described" ref="VSP_023452"/>
    </isoform>
    <isoform>
        <id>Q9H6X4-3</id>
        <name>3</name>
        <sequence type="described" ref="VSP_023453 VSP_023454"/>
    </isoform>
</comment>
<comment type="similarity">
    <text evidence="6">Belongs to the TMEM134/TMEM230 family.</text>
</comment>
<proteinExistence type="evidence at protein level"/>
<accession>Q9H6X4</accession>
<accession>Q08AK4</accession>
<accession>Q6PJN3</accession>